<accession>A6VKC7</accession>
<comment type="function">
    <text evidence="1">Forms part of the ribosomal stalk, playing a central role in the interaction of the ribosome with GTP-bound translation factors.</text>
</comment>
<comment type="subunit">
    <text evidence="1">Part of the ribosomal stalk of the 50S ribosomal subunit. The N-terminus interacts with L11 and the large rRNA to form the base of the stalk. The C-terminus forms an elongated spine to which L12 dimers bind in a sequential fashion forming a multimeric L10(L12)X complex.</text>
</comment>
<comment type="similarity">
    <text evidence="1">Belongs to the universal ribosomal protein uL10 family.</text>
</comment>
<proteinExistence type="inferred from homology"/>
<dbReference type="EMBL" id="CP000746">
    <property type="protein sequence ID" value="ABR73424.1"/>
    <property type="molecule type" value="Genomic_DNA"/>
</dbReference>
<dbReference type="RefSeq" id="WP_011978700.1">
    <property type="nucleotide sequence ID" value="NC_009655.1"/>
</dbReference>
<dbReference type="SMR" id="A6VKC7"/>
<dbReference type="STRING" id="339671.Asuc_0043"/>
<dbReference type="KEGG" id="asu:Asuc_0043"/>
<dbReference type="eggNOG" id="COG0244">
    <property type="taxonomic scope" value="Bacteria"/>
</dbReference>
<dbReference type="HOGENOM" id="CLU_092227_0_2_6"/>
<dbReference type="OrthoDB" id="9808307at2"/>
<dbReference type="Proteomes" id="UP000001114">
    <property type="component" value="Chromosome"/>
</dbReference>
<dbReference type="GO" id="GO:0015934">
    <property type="term" value="C:large ribosomal subunit"/>
    <property type="evidence" value="ECO:0007669"/>
    <property type="project" value="InterPro"/>
</dbReference>
<dbReference type="GO" id="GO:0070180">
    <property type="term" value="F:large ribosomal subunit rRNA binding"/>
    <property type="evidence" value="ECO:0007669"/>
    <property type="project" value="UniProtKB-UniRule"/>
</dbReference>
<dbReference type="GO" id="GO:0003735">
    <property type="term" value="F:structural constituent of ribosome"/>
    <property type="evidence" value="ECO:0007669"/>
    <property type="project" value="InterPro"/>
</dbReference>
<dbReference type="GO" id="GO:0006412">
    <property type="term" value="P:translation"/>
    <property type="evidence" value="ECO:0007669"/>
    <property type="project" value="UniProtKB-UniRule"/>
</dbReference>
<dbReference type="CDD" id="cd05797">
    <property type="entry name" value="Ribosomal_L10"/>
    <property type="match status" value="1"/>
</dbReference>
<dbReference type="FunFam" id="3.30.70.1730:FF:000001">
    <property type="entry name" value="50S ribosomal protein L10"/>
    <property type="match status" value="1"/>
</dbReference>
<dbReference type="Gene3D" id="3.30.70.1730">
    <property type="match status" value="1"/>
</dbReference>
<dbReference type="Gene3D" id="6.10.250.2350">
    <property type="match status" value="1"/>
</dbReference>
<dbReference type="HAMAP" id="MF_00362">
    <property type="entry name" value="Ribosomal_uL10"/>
    <property type="match status" value="1"/>
</dbReference>
<dbReference type="InterPro" id="IPR001790">
    <property type="entry name" value="Ribosomal_uL10"/>
</dbReference>
<dbReference type="InterPro" id="IPR043141">
    <property type="entry name" value="Ribosomal_uL10-like_sf"/>
</dbReference>
<dbReference type="InterPro" id="IPR022973">
    <property type="entry name" value="Ribosomal_uL10_bac"/>
</dbReference>
<dbReference type="InterPro" id="IPR047865">
    <property type="entry name" value="Ribosomal_uL10_bac_type"/>
</dbReference>
<dbReference type="InterPro" id="IPR002363">
    <property type="entry name" value="Ribosomal_uL10_CS_bac"/>
</dbReference>
<dbReference type="NCBIfam" id="NF000955">
    <property type="entry name" value="PRK00099.1-1"/>
    <property type="match status" value="1"/>
</dbReference>
<dbReference type="PANTHER" id="PTHR11560">
    <property type="entry name" value="39S RIBOSOMAL PROTEIN L10, MITOCHONDRIAL"/>
    <property type="match status" value="1"/>
</dbReference>
<dbReference type="Pfam" id="PF00466">
    <property type="entry name" value="Ribosomal_L10"/>
    <property type="match status" value="1"/>
</dbReference>
<dbReference type="SUPFAM" id="SSF160369">
    <property type="entry name" value="Ribosomal protein L10-like"/>
    <property type="match status" value="1"/>
</dbReference>
<dbReference type="PROSITE" id="PS01109">
    <property type="entry name" value="RIBOSOMAL_L10"/>
    <property type="match status" value="1"/>
</dbReference>
<name>RL10_ACTSZ</name>
<evidence type="ECO:0000255" key="1">
    <source>
        <dbReference type="HAMAP-Rule" id="MF_00362"/>
    </source>
</evidence>
<evidence type="ECO:0000305" key="2"/>
<protein>
    <recommendedName>
        <fullName evidence="1">Large ribosomal subunit protein uL10</fullName>
    </recommendedName>
    <alternativeName>
        <fullName evidence="2">50S ribosomal protein L10</fullName>
    </alternativeName>
</protein>
<reference key="1">
    <citation type="journal article" date="2010" name="BMC Genomics">
        <title>A genomic perspective on the potential of Actinobacillus succinogenes for industrial succinate production.</title>
        <authorList>
            <person name="McKinlay J.B."/>
            <person name="Laivenieks M."/>
            <person name="Schindler B.D."/>
            <person name="McKinlay A.A."/>
            <person name="Siddaramappa S."/>
            <person name="Challacombe J.F."/>
            <person name="Lowry S.R."/>
            <person name="Clum A."/>
            <person name="Lapidus A.L."/>
            <person name="Burkhart K.B."/>
            <person name="Harkins V."/>
            <person name="Vieille C."/>
        </authorList>
    </citation>
    <scope>NUCLEOTIDE SEQUENCE [LARGE SCALE GENOMIC DNA]</scope>
    <source>
        <strain>ATCC 55618 / DSM 22257 / CCUG 43843 / 130Z</strain>
    </source>
</reference>
<keyword id="KW-1185">Reference proteome</keyword>
<keyword id="KW-0687">Ribonucleoprotein</keyword>
<keyword id="KW-0689">Ribosomal protein</keyword>
<keyword id="KW-0694">RNA-binding</keyword>
<keyword id="KW-0699">rRNA-binding</keyword>
<gene>
    <name evidence="1" type="primary">rplJ</name>
    <name type="ordered locus">Asuc_0043</name>
</gene>
<feature type="chain" id="PRO_1000072087" description="Large ribosomal subunit protein uL10">
    <location>
        <begin position="1"/>
        <end position="163"/>
    </location>
</feature>
<sequence length="163" mass="17621">MALNLQDKQAIVAEVNEAAKGALSAVIADSRGVTVDKMTELRKAAREAGVSMRVVRNTLLRRAVEGTEFECLTDTFTGPTLIAFSNEHPGAAARLFKDFAKANDKFEIKGAAFEGKIQDIDFLATLPTYEEAIARLMGTMKEAAAGKLVRTFAALRDKLQEAA</sequence>
<organism>
    <name type="scientific">Actinobacillus succinogenes (strain ATCC 55618 / DSM 22257 / CCUG 43843 / 130Z)</name>
    <dbReference type="NCBI Taxonomy" id="339671"/>
    <lineage>
        <taxon>Bacteria</taxon>
        <taxon>Pseudomonadati</taxon>
        <taxon>Pseudomonadota</taxon>
        <taxon>Gammaproteobacteria</taxon>
        <taxon>Pasteurellales</taxon>
        <taxon>Pasteurellaceae</taxon>
        <taxon>Actinobacillus</taxon>
    </lineage>
</organism>